<evidence type="ECO:0000255" key="1">
    <source>
        <dbReference type="HAMAP-Rule" id="MF_00530"/>
    </source>
</evidence>
<sequence length="113" mass="12778">MNTFKVQFFSPDNRISFDEVVSLSVNGLEGELVILAYHSPYLIYLLPGIITAQMSNQTKEKVVIDNGILEVANNNCSIITNQIQVFDHLTHDEESLKDKRVGIYLSYLDVKSL</sequence>
<gene>
    <name evidence="1" type="primary">atpC</name>
    <name type="ordered locus">WP1158</name>
</gene>
<name>ATPE_WOLPP</name>
<organism>
    <name type="scientific">Wolbachia pipientis subsp. Culex pipiens (strain wPip)</name>
    <dbReference type="NCBI Taxonomy" id="570417"/>
    <lineage>
        <taxon>Bacteria</taxon>
        <taxon>Pseudomonadati</taxon>
        <taxon>Pseudomonadota</taxon>
        <taxon>Alphaproteobacteria</taxon>
        <taxon>Rickettsiales</taxon>
        <taxon>Anaplasmataceae</taxon>
        <taxon>Wolbachieae</taxon>
        <taxon>Wolbachia</taxon>
    </lineage>
</organism>
<protein>
    <recommendedName>
        <fullName evidence="1">ATP synthase epsilon chain</fullName>
    </recommendedName>
    <alternativeName>
        <fullName evidence="1">ATP synthase F1 sector epsilon subunit</fullName>
    </alternativeName>
    <alternativeName>
        <fullName evidence="1">F-ATPase epsilon subunit</fullName>
    </alternativeName>
</protein>
<reference key="1">
    <citation type="journal article" date="2008" name="Mol. Biol. Evol.">
        <title>Genome evolution of Wolbachia strain wPip from the Culex pipiens group.</title>
        <authorList>
            <person name="Klasson L."/>
            <person name="Walker T."/>
            <person name="Sebaihia M."/>
            <person name="Sanders M.J."/>
            <person name="Quail M.A."/>
            <person name="Lord A."/>
            <person name="Sanders S."/>
            <person name="Earl J."/>
            <person name="O'Neill S.L."/>
            <person name="Thomson N."/>
            <person name="Sinkins S.P."/>
            <person name="Parkhill J."/>
        </authorList>
    </citation>
    <scope>NUCLEOTIDE SEQUENCE [LARGE SCALE GENOMIC DNA]</scope>
    <source>
        <strain>wPip</strain>
    </source>
</reference>
<comment type="function">
    <text evidence="1">Produces ATP from ADP in the presence of a proton gradient across the membrane.</text>
</comment>
<comment type="subunit">
    <text evidence="1">F-type ATPases have 2 components, CF(1) - the catalytic core - and CF(0) - the membrane proton channel. CF(1) has five subunits: alpha(3), beta(3), gamma(1), delta(1), epsilon(1). CF(0) has three main subunits: a, b and c.</text>
</comment>
<comment type="subcellular location">
    <subcellularLocation>
        <location evidence="1">Cell membrane</location>
        <topology evidence="1">Peripheral membrane protein</topology>
    </subcellularLocation>
</comment>
<comment type="similarity">
    <text evidence="1">Belongs to the ATPase epsilon chain family.</text>
</comment>
<proteinExistence type="inferred from homology"/>
<keyword id="KW-0066">ATP synthesis</keyword>
<keyword id="KW-1003">Cell membrane</keyword>
<keyword id="KW-0139">CF(1)</keyword>
<keyword id="KW-0375">Hydrogen ion transport</keyword>
<keyword id="KW-0406">Ion transport</keyword>
<keyword id="KW-0472">Membrane</keyword>
<keyword id="KW-0813">Transport</keyword>
<dbReference type="EMBL" id="AM999887">
    <property type="protein sequence ID" value="CAQ55266.1"/>
    <property type="molecule type" value="Genomic_DNA"/>
</dbReference>
<dbReference type="RefSeq" id="WP_012482002.1">
    <property type="nucleotide sequence ID" value="NC_010981.1"/>
</dbReference>
<dbReference type="SMR" id="B3CN18"/>
<dbReference type="KEGG" id="wpi:WP1158"/>
<dbReference type="eggNOG" id="COG0355">
    <property type="taxonomic scope" value="Bacteria"/>
</dbReference>
<dbReference type="HOGENOM" id="CLU_2157366_0_0_5"/>
<dbReference type="Proteomes" id="UP000008814">
    <property type="component" value="Chromosome"/>
</dbReference>
<dbReference type="GO" id="GO:0005886">
    <property type="term" value="C:plasma membrane"/>
    <property type="evidence" value="ECO:0007669"/>
    <property type="project" value="UniProtKB-SubCell"/>
</dbReference>
<dbReference type="GO" id="GO:0045259">
    <property type="term" value="C:proton-transporting ATP synthase complex"/>
    <property type="evidence" value="ECO:0007669"/>
    <property type="project" value="UniProtKB-KW"/>
</dbReference>
<dbReference type="GO" id="GO:0005524">
    <property type="term" value="F:ATP binding"/>
    <property type="evidence" value="ECO:0007669"/>
    <property type="project" value="UniProtKB-UniRule"/>
</dbReference>
<dbReference type="GO" id="GO:0046933">
    <property type="term" value="F:proton-transporting ATP synthase activity, rotational mechanism"/>
    <property type="evidence" value="ECO:0007669"/>
    <property type="project" value="UniProtKB-UniRule"/>
</dbReference>
<dbReference type="CDD" id="cd12152">
    <property type="entry name" value="F1-ATPase_delta"/>
    <property type="match status" value="1"/>
</dbReference>
<dbReference type="Gene3D" id="2.60.15.10">
    <property type="entry name" value="F0F1 ATP synthase delta/epsilon subunit, N-terminal"/>
    <property type="match status" value="1"/>
</dbReference>
<dbReference type="HAMAP" id="MF_00530">
    <property type="entry name" value="ATP_synth_epsil_bac"/>
    <property type="match status" value="1"/>
</dbReference>
<dbReference type="InterPro" id="IPR001469">
    <property type="entry name" value="ATP_synth_F1_dsu/esu"/>
</dbReference>
<dbReference type="InterPro" id="IPR020546">
    <property type="entry name" value="ATP_synth_F1_dsu/esu_N"/>
</dbReference>
<dbReference type="InterPro" id="IPR036771">
    <property type="entry name" value="ATPsynth_dsu/esu_N"/>
</dbReference>
<dbReference type="Pfam" id="PF02823">
    <property type="entry name" value="ATP-synt_DE_N"/>
    <property type="match status" value="1"/>
</dbReference>
<dbReference type="SUPFAM" id="SSF51344">
    <property type="entry name" value="Epsilon subunit of F1F0-ATP synthase N-terminal domain"/>
    <property type="match status" value="1"/>
</dbReference>
<accession>B3CN18</accession>
<feature type="chain" id="PRO_1000127906" description="ATP synthase epsilon chain">
    <location>
        <begin position="1"/>
        <end position="113"/>
    </location>
</feature>